<organism>
    <name type="scientific">Anaeromyxobacter sp. (strain K)</name>
    <dbReference type="NCBI Taxonomy" id="447217"/>
    <lineage>
        <taxon>Bacteria</taxon>
        <taxon>Pseudomonadati</taxon>
        <taxon>Myxococcota</taxon>
        <taxon>Myxococcia</taxon>
        <taxon>Myxococcales</taxon>
        <taxon>Cystobacterineae</taxon>
        <taxon>Anaeromyxobacteraceae</taxon>
        <taxon>Anaeromyxobacter</taxon>
    </lineage>
</organism>
<reference key="1">
    <citation type="submission" date="2008-08" db="EMBL/GenBank/DDBJ databases">
        <title>Complete sequence of Anaeromyxobacter sp. K.</title>
        <authorList>
            <consortium name="US DOE Joint Genome Institute"/>
            <person name="Lucas S."/>
            <person name="Copeland A."/>
            <person name="Lapidus A."/>
            <person name="Glavina del Rio T."/>
            <person name="Dalin E."/>
            <person name="Tice H."/>
            <person name="Bruce D."/>
            <person name="Goodwin L."/>
            <person name="Pitluck S."/>
            <person name="Saunders E."/>
            <person name="Brettin T."/>
            <person name="Detter J.C."/>
            <person name="Han C."/>
            <person name="Larimer F."/>
            <person name="Land M."/>
            <person name="Hauser L."/>
            <person name="Kyrpides N."/>
            <person name="Ovchinnikiva G."/>
            <person name="Beliaev A."/>
        </authorList>
    </citation>
    <scope>NUCLEOTIDE SEQUENCE [LARGE SCALE GENOMIC DNA]</scope>
    <source>
        <strain>K</strain>
    </source>
</reference>
<feature type="chain" id="PRO_1000134770" description="Transcriptional regulator MraZ">
    <location>
        <begin position="1"/>
        <end position="145"/>
    </location>
</feature>
<feature type="domain" description="SpoVT-AbrB 1" evidence="2">
    <location>
        <begin position="5"/>
        <end position="50"/>
    </location>
</feature>
<feature type="domain" description="SpoVT-AbrB 2" evidence="2">
    <location>
        <begin position="81"/>
        <end position="124"/>
    </location>
</feature>
<protein>
    <recommendedName>
        <fullName>Transcriptional regulator MraZ</fullName>
    </recommendedName>
</protein>
<keyword id="KW-0963">Cytoplasm</keyword>
<keyword id="KW-0238">DNA-binding</keyword>
<keyword id="KW-0677">Repeat</keyword>
<keyword id="KW-0804">Transcription</keyword>
<keyword id="KW-0805">Transcription regulation</keyword>
<accession>B4UER1</accession>
<sequence length="145" mass="16482">MFFGTFNHAIDAKGRTSLPAKFREALAAAGEPRIVLMQYPHWRAVQALPQSVWNELVKKVMEASPLDARWQRNVLKFVSSAHEVDLDVHGRVLVPPPLREWAGLQKDVVWVGMGRTIHLYDRAAYDEQMSAEIPADQVVDFFRTA</sequence>
<name>MRAZ_ANASK</name>
<comment type="subunit">
    <text evidence="1">Forms oligomers.</text>
</comment>
<comment type="subcellular location">
    <subcellularLocation>
        <location evidence="1">Cytoplasm</location>
        <location evidence="1">Nucleoid</location>
    </subcellularLocation>
</comment>
<comment type="similarity">
    <text evidence="1">Belongs to the MraZ family.</text>
</comment>
<gene>
    <name evidence="1" type="primary">mraZ</name>
    <name type="ordered locus">AnaeK_3817</name>
</gene>
<evidence type="ECO:0000255" key="1">
    <source>
        <dbReference type="HAMAP-Rule" id="MF_01008"/>
    </source>
</evidence>
<evidence type="ECO:0000255" key="2">
    <source>
        <dbReference type="PROSITE-ProRule" id="PRU01076"/>
    </source>
</evidence>
<dbReference type="EMBL" id="CP001131">
    <property type="protein sequence ID" value="ACG75028.1"/>
    <property type="molecule type" value="Genomic_DNA"/>
</dbReference>
<dbReference type="RefSeq" id="WP_012527790.1">
    <property type="nucleotide sequence ID" value="NC_011145.1"/>
</dbReference>
<dbReference type="SMR" id="B4UER1"/>
<dbReference type="KEGG" id="ank:AnaeK_3817"/>
<dbReference type="HOGENOM" id="CLU_107907_1_0_7"/>
<dbReference type="OrthoDB" id="9807753at2"/>
<dbReference type="Proteomes" id="UP000001871">
    <property type="component" value="Chromosome"/>
</dbReference>
<dbReference type="GO" id="GO:0005737">
    <property type="term" value="C:cytoplasm"/>
    <property type="evidence" value="ECO:0007669"/>
    <property type="project" value="UniProtKB-UniRule"/>
</dbReference>
<dbReference type="GO" id="GO:0009295">
    <property type="term" value="C:nucleoid"/>
    <property type="evidence" value="ECO:0007669"/>
    <property type="project" value="UniProtKB-SubCell"/>
</dbReference>
<dbReference type="GO" id="GO:0003700">
    <property type="term" value="F:DNA-binding transcription factor activity"/>
    <property type="evidence" value="ECO:0007669"/>
    <property type="project" value="UniProtKB-UniRule"/>
</dbReference>
<dbReference type="GO" id="GO:0000976">
    <property type="term" value="F:transcription cis-regulatory region binding"/>
    <property type="evidence" value="ECO:0007669"/>
    <property type="project" value="TreeGrafter"/>
</dbReference>
<dbReference type="GO" id="GO:2000143">
    <property type="term" value="P:negative regulation of DNA-templated transcription initiation"/>
    <property type="evidence" value="ECO:0007669"/>
    <property type="project" value="TreeGrafter"/>
</dbReference>
<dbReference type="CDD" id="cd16321">
    <property type="entry name" value="MraZ_C"/>
    <property type="match status" value="1"/>
</dbReference>
<dbReference type="CDD" id="cd16320">
    <property type="entry name" value="MraZ_N"/>
    <property type="match status" value="1"/>
</dbReference>
<dbReference type="Gene3D" id="3.40.1550.20">
    <property type="entry name" value="Transcriptional regulator MraZ domain"/>
    <property type="match status" value="1"/>
</dbReference>
<dbReference type="HAMAP" id="MF_01008">
    <property type="entry name" value="MraZ"/>
    <property type="match status" value="1"/>
</dbReference>
<dbReference type="InterPro" id="IPR003444">
    <property type="entry name" value="MraZ"/>
</dbReference>
<dbReference type="InterPro" id="IPR035644">
    <property type="entry name" value="MraZ_C"/>
</dbReference>
<dbReference type="InterPro" id="IPR020603">
    <property type="entry name" value="MraZ_dom"/>
</dbReference>
<dbReference type="InterPro" id="IPR035642">
    <property type="entry name" value="MraZ_N"/>
</dbReference>
<dbReference type="InterPro" id="IPR038619">
    <property type="entry name" value="MraZ_sf"/>
</dbReference>
<dbReference type="InterPro" id="IPR007159">
    <property type="entry name" value="SpoVT-AbrB_dom"/>
</dbReference>
<dbReference type="InterPro" id="IPR037914">
    <property type="entry name" value="SpoVT-AbrB_sf"/>
</dbReference>
<dbReference type="PANTHER" id="PTHR34701">
    <property type="entry name" value="TRANSCRIPTIONAL REGULATOR MRAZ"/>
    <property type="match status" value="1"/>
</dbReference>
<dbReference type="PANTHER" id="PTHR34701:SF1">
    <property type="entry name" value="TRANSCRIPTIONAL REGULATOR MRAZ"/>
    <property type="match status" value="1"/>
</dbReference>
<dbReference type="Pfam" id="PF02381">
    <property type="entry name" value="MraZ"/>
    <property type="match status" value="2"/>
</dbReference>
<dbReference type="SUPFAM" id="SSF89447">
    <property type="entry name" value="AbrB/MazE/MraZ-like"/>
    <property type="match status" value="1"/>
</dbReference>
<dbReference type="PROSITE" id="PS51740">
    <property type="entry name" value="SPOVT_ABRB"/>
    <property type="match status" value="2"/>
</dbReference>
<proteinExistence type="inferred from homology"/>